<keyword id="KW-0053">Apoptosis</keyword>
<keyword id="KW-0963">Cytoplasm</keyword>
<keyword id="KW-0217">Developmental protein</keyword>
<keyword id="KW-1185">Reference proteome</keyword>
<gene>
    <name type="primary">chrb</name>
    <name type="ORF">GA20420</name>
</gene>
<proteinExistence type="evidence at transcript level"/>
<feature type="chain" id="PRO_0000307210" description="Protein charybde">
    <location>
        <begin position="1"/>
        <end position="289"/>
    </location>
</feature>
<feature type="region of interest" description="Disordered" evidence="2">
    <location>
        <begin position="119"/>
        <end position="142"/>
    </location>
</feature>
<accession>Q2LZ58</accession>
<name>CHRB_DROPS</name>
<dbReference type="EMBL" id="CH379069">
    <property type="protein sequence ID" value="EAL29651.1"/>
    <property type="molecule type" value="Genomic_DNA"/>
</dbReference>
<dbReference type="RefSeq" id="XP_001353915.1">
    <property type="nucleotide sequence ID" value="XM_001353879.3"/>
</dbReference>
<dbReference type="SMR" id="Q2LZ58"/>
<dbReference type="FunCoup" id="Q2LZ58">
    <property type="interactions" value="64"/>
</dbReference>
<dbReference type="STRING" id="46245.Q2LZ58"/>
<dbReference type="EnsemblMetazoa" id="FBtr0275731">
    <property type="protein sequence ID" value="FBpp0274169"/>
    <property type="gene ID" value="FBgn0080415"/>
</dbReference>
<dbReference type="GeneID" id="4813232"/>
<dbReference type="KEGG" id="dpo:4813232"/>
<dbReference type="CTD" id="39284"/>
<dbReference type="eggNOG" id="ENOG502R3EE">
    <property type="taxonomic scope" value="Eukaryota"/>
</dbReference>
<dbReference type="HOGENOM" id="CLU_074668_0_0_1"/>
<dbReference type="InParanoid" id="Q2LZ58"/>
<dbReference type="OMA" id="KDWQAST"/>
<dbReference type="PhylomeDB" id="Q2LZ58"/>
<dbReference type="ChiTaRS" id="chrb">
    <property type="organism name" value="fly"/>
</dbReference>
<dbReference type="Proteomes" id="UP000001819">
    <property type="component" value="Chromosome X"/>
</dbReference>
<dbReference type="Bgee" id="FBgn0080415">
    <property type="expression patterns" value="Expressed in insect adult head and 2 other cell types or tissues"/>
</dbReference>
<dbReference type="ExpressionAtlas" id="Q2LZ58">
    <property type="expression patterns" value="baseline"/>
</dbReference>
<dbReference type="GO" id="GO:0005737">
    <property type="term" value="C:cytoplasm"/>
    <property type="evidence" value="ECO:0000250"/>
    <property type="project" value="UniProtKB"/>
</dbReference>
<dbReference type="GO" id="GO:0006915">
    <property type="term" value="P:apoptotic process"/>
    <property type="evidence" value="ECO:0000250"/>
    <property type="project" value="UniProtKB"/>
</dbReference>
<dbReference type="GO" id="GO:0008258">
    <property type="term" value="P:head involution"/>
    <property type="evidence" value="ECO:0000250"/>
    <property type="project" value="UniProtKB"/>
</dbReference>
<dbReference type="GO" id="GO:0009968">
    <property type="term" value="P:negative regulation of signal transduction"/>
    <property type="evidence" value="ECO:0007669"/>
    <property type="project" value="InterPro"/>
</dbReference>
<dbReference type="GO" id="GO:0032006">
    <property type="term" value="P:regulation of TOR signaling"/>
    <property type="evidence" value="ECO:0000250"/>
    <property type="project" value="UniProtKB"/>
</dbReference>
<dbReference type="GO" id="GO:0006979">
    <property type="term" value="P:response to oxidative stress"/>
    <property type="evidence" value="ECO:0000250"/>
    <property type="project" value="UniProtKB"/>
</dbReference>
<dbReference type="FunFam" id="3.90.470.40:FF:000003">
    <property type="entry name" value="Charybde, isoform E"/>
    <property type="match status" value="1"/>
</dbReference>
<dbReference type="Gene3D" id="3.90.470.40">
    <property type="entry name" value="RTP801-like"/>
    <property type="match status" value="1"/>
</dbReference>
<dbReference type="InterPro" id="IPR012918">
    <property type="entry name" value="RTP801-like"/>
</dbReference>
<dbReference type="InterPro" id="IPR038281">
    <property type="entry name" value="RTP801-like_C_sf"/>
</dbReference>
<dbReference type="PANTHER" id="PTHR12478">
    <property type="entry name" value="DNA-DAMAGE-INDUCIBLE TRANSCRIPT 4 PROTEIN DDIT4"/>
    <property type="match status" value="1"/>
</dbReference>
<dbReference type="PANTHER" id="PTHR12478:SF16">
    <property type="entry name" value="PROTEIN CHARYBDE-RELATED"/>
    <property type="match status" value="1"/>
</dbReference>
<dbReference type="Pfam" id="PF07809">
    <property type="entry name" value="RTP801_C"/>
    <property type="match status" value="1"/>
</dbReference>
<protein>
    <recommendedName>
        <fullName>Protein charybde</fullName>
    </recommendedName>
</protein>
<evidence type="ECO:0000250" key="1"/>
<evidence type="ECO:0000256" key="2">
    <source>
        <dbReference type="SAM" id="MobiDB-lite"/>
    </source>
</evidence>
<evidence type="ECO:0000305" key="3"/>
<evidence type="ECO:0000305" key="4">
    <source>
    </source>
</evidence>
<organism>
    <name type="scientific">Drosophila pseudoobscura pseudoobscura</name>
    <name type="common">Fruit fly</name>
    <dbReference type="NCBI Taxonomy" id="46245"/>
    <lineage>
        <taxon>Eukaryota</taxon>
        <taxon>Metazoa</taxon>
        <taxon>Ecdysozoa</taxon>
        <taxon>Arthropoda</taxon>
        <taxon>Hexapoda</taxon>
        <taxon>Insecta</taxon>
        <taxon>Pterygota</taxon>
        <taxon>Neoptera</taxon>
        <taxon>Endopterygota</taxon>
        <taxon>Diptera</taxon>
        <taxon>Brachycera</taxon>
        <taxon>Muscomorpha</taxon>
        <taxon>Ephydroidea</taxon>
        <taxon>Drosophilidae</taxon>
        <taxon>Drosophila</taxon>
        <taxon>Sophophora</taxon>
    </lineage>
</organism>
<reference key="1">
    <citation type="journal article" date="2005" name="Genome Res.">
        <title>Comparative genome sequencing of Drosophila pseudoobscura: chromosomal, gene, and cis-element evolution.</title>
        <authorList>
            <person name="Richards S."/>
            <person name="Liu Y."/>
            <person name="Bettencourt B.R."/>
            <person name="Hradecky P."/>
            <person name="Letovsky S."/>
            <person name="Nielsen R."/>
            <person name="Thornton K."/>
            <person name="Hubisz M.J."/>
            <person name="Chen R."/>
            <person name="Meisel R.P."/>
            <person name="Couronne O."/>
            <person name="Hua S."/>
            <person name="Smith M.A."/>
            <person name="Zhang P."/>
            <person name="Liu J."/>
            <person name="Bussemaker H.J."/>
            <person name="van Batenburg M.F."/>
            <person name="Howells S.L."/>
            <person name="Scherer S.E."/>
            <person name="Sodergren E."/>
            <person name="Matthews B.B."/>
            <person name="Crosby M.A."/>
            <person name="Schroeder A.J."/>
            <person name="Ortiz-Barrientos D."/>
            <person name="Rives C.M."/>
            <person name="Metzker M.L."/>
            <person name="Muzny D.M."/>
            <person name="Scott G."/>
            <person name="Steffen D."/>
            <person name="Wheeler D.A."/>
            <person name="Worley K.C."/>
            <person name="Havlak P."/>
            <person name="Durbin K.J."/>
            <person name="Egan A."/>
            <person name="Gill R."/>
            <person name="Hume J."/>
            <person name="Morgan M.B."/>
            <person name="Miner G."/>
            <person name="Hamilton C."/>
            <person name="Huang Y."/>
            <person name="Waldron L."/>
            <person name="Verduzco D."/>
            <person name="Clerc-Blankenburg K.P."/>
            <person name="Dubchak I."/>
            <person name="Noor M.A.F."/>
            <person name="Anderson W."/>
            <person name="White K.P."/>
            <person name="Clark A.G."/>
            <person name="Schaeffer S.W."/>
            <person name="Gelbart W.M."/>
            <person name="Weinstock G.M."/>
            <person name="Gibbs R.A."/>
        </authorList>
    </citation>
    <scope>NUCLEOTIDE SEQUENCE [LARGE SCALE GENOMIC DNA]</scope>
    <source>
        <strain>MV2-25 / Tucson 14011-0121.94</strain>
    </source>
</reference>
<reference key="2">
    <citation type="journal article" date="2006" name="Dev. Biol.">
        <title>scylla and charybde, homologues of the human apoptotic gene RTP801, are required for head involution in Drosophila.</title>
        <authorList>
            <person name="Scuderi A."/>
            <person name="Simin K."/>
            <person name="Kazuko S.G."/>
            <person name="Metherall J.E."/>
            <person name="Letsou A."/>
        </authorList>
    </citation>
    <scope>IDENTIFICATION</scope>
    <scope>INDUCTION</scope>
</reference>
<sequence>MKMEVLSVQNHIQGKFGVNKIKDWPSSGVASTAPHPLEEEEENAVDVNAALDADVVDGHPASVLHMRQHQALNTRSTVPMAPPVAGSGKQSAVAASFDVVNGSSAAYHHAYMTNVLASTAHHPGHGHGPGPSPMPASPLQSTAGARFGAADNMDDVSASAVRDLSQQLQFQLRDAKQRHLACTEVNLPADLTERIAAEIIRMSDREPCGERACTLFIEFESEPNNVRRIASFKVDPDTVSIFELYLTLKQDKSGWTSLLPQFIKNLTRSNTINISPDFTLTKNKLYSSE</sequence>
<comment type="function">
    <text evidence="1">Inhibits cell growth by regulating the Tor pathway upstream of the Tsc1-Tsc2 complex and downstream of Akt1. Acts as a cell death activator during head development (By similarity).</text>
</comment>
<comment type="subcellular location">
    <subcellularLocation>
        <location evidence="1">Cytoplasm</location>
    </subcellularLocation>
</comment>
<comment type="induction">
    <text evidence="4">By homeobox transcription factors.</text>
</comment>
<comment type="similarity">
    <text evidence="3">Belongs to the DDIT4 family.</text>
</comment>